<organism>
    <name type="scientific">Aspergillus fumigatus (strain ATCC MYA-4609 / CBS 101355 / FGSC A1100 / Af293)</name>
    <name type="common">Neosartorya fumigata</name>
    <dbReference type="NCBI Taxonomy" id="330879"/>
    <lineage>
        <taxon>Eukaryota</taxon>
        <taxon>Fungi</taxon>
        <taxon>Dikarya</taxon>
        <taxon>Ascomycota</taxon>
        <taxon>Pezizomycotina</taxon>
        <taxon>Eurotiomycetes</taxon>
        <taxon>Eurotiomycetidae</taxon>
        <taxon>Eurotiales</taxon>
        <taxon>Aspergillaceae</taxon>
        <taxon>Aspergillus</taxon>
        <taxon>Aspergillus subgen. Fumigati</taxon>
    </lineage>
</organism>
<gene>
    <name type="ORF">AFUA_4G03210</name>
</gene>
<feature type="signal peptide" evidence="4">
    <location>
        <begin position="1"/>
        <end position="17"/>
    </location>
</feature>
<feature type="chain" id="PRO_0000395250" description="Probable cutinase 3">
    <location>
        <begin position="18"/>
        <end position="217"/>
    </location>
</feature>
<feature type="active site" description="Nucleophile" evidence="5">
    <location>
        <position position="129"/>
    </location>
</feature>
<feature type="active site" evidence="5">
    <location>
        <position position="184"/>
    </location>
</feature>
<feature type="active site" description="Proton donor/acceptor" evidence="5">
    <location>
        <position position="197"/>
    </location>
</feature>
<feature type="site" description="Transition state stabilizer" evidence="1">
    <location>
        <position position="50"/>
    </location>
</feature>
<feature type="site" description="Transition state stabilizer" evidence="1">
    <location>
        <position position="130"/>
    </location>
</feature>
<feature type="disulfide bond" evidence="3">
    <location>
        <begin position="39"/>
        <end position="118"/>
    </location>
</feature>
<feature type="disulfide bond" evidence="3">
    <location>
        <begin position="65"/>
        <end position="79"/>
    </location>
</feature>
<feature type="disulfide bond" evidence="3">
    <location>
        <begin position="180"/>
        <end position="187"/>
    </location>
</feature>
<sequence length="217" mass="22483">MSLRSLFVAGLATLALAVPAPQIQARQGMSSNELESGPCRDVTFIFARGSTEQGNMGLIVGPGVCSSLKKDLGSDKVACQGVGGAYTAQLAPNFLSQNTNQASINAATDMFDLANTKCPNTKIVAGGYSQGSAVIDNTIQALGSDLKAKVKGVVLFGFTRNVADKGQIPGYPKDQTKIYCAVGDMVCVNTLIITPAHLTYGADAGDAAKFLASKVQE</sequence>
<dbReference type="EC" id="3.1.1.74" evidence="5"/>
<dbReference type="EMBL" id="AAHF01000016">
    <property type="protein sequence ID" value="EAL84469.1"/>
    <property type="molecule type" value="Genomic_DNA"/>
</dbReference>
<dbReference type="RefSeq" id="XP_746507.1">
    <property type="nucleotide sequence ID" value="XM_741414.1"/>
</dbReference>
<dbReference type="SMR" id="Q4W9Z4"/>
<dbReference type="ESTHER" id="aspfu-q4w9z4">
    <property type="family name" value="Cutinase"/>
</dbReference>
<dbReference type="EnsemblFungi" id="EAL84469">
    <property type="protein sequence ID" value="EAL84469"/>
    <property type="gene ID" value="AFUA_4G03210"/>
</dbReference>
<dbReference type="GeneID" id="3504036"/>
<dbReference type="KEGG" id="afm:AFUA_4G03210"/>
<dbReference type="VEuPathDB" id="FungiDB:Afu4g03210"/>
<dbReference type="eggNOG" id="ENOG502SI38">
    <property type="taxonomic scope" value="Eukaryota"/>
</dbReference>
<dbReference type="HOGENOM" id="CLU_040058_2_0_1"/>
<dbReference type="InParanoid" id="Q4W9Z4"/>
<dbReference type="OMA" id="FFGFTRN"/>
<dbReference type="OrthoDB" id="3225429at2759"/>
<dbReference type="Proteomes" id="UP000002530">
    <property type="component" value="Chromosome 4"/>
</dbReference>
<dbReference type="GO" id="GO:0005576">
    <property type="term" value="C:extracellular region"/>
    <property type="evidence" value="ECO:0007669"/>
    <property type="project" value="UniProtKB-SubCell"/>
</dbReference>
<dbReference type="GO" id="GO:0106435">
    <property type="term" value="F:carboxylesterase activity"/>
    <property type="evidence" value="ECO:0000318"/>
    <property type="project" value="GO_Central"/>
</dbReference>
<dbReference type="GO" id="GO:0050525">
    <property type="term" value="F:cutinase activity"/>
    <property type="evidence" value="ECO:0000250"/>
    <property type="project" value="UniProtKB"/>
</dbReference>
<dbReference type="GO" id="GO:0016298">
    <property type="term" value="F:lipase activity"/>
    <property type="evidence" value="ECO:0000318"/>
    <property type="project" value="GO_Central"/>
</dbReference>
<dbReference type="GO" id="GO:0016042">
    <property type="term" value="P:lipid catabolic process"/>
    <property type="evidence" value="ECO:0000318"/>
    <property type="project" value="GO_Central"/>
</dbReference>
<dbReference type="FunFam" id="3.40.50.1820:FF:000235">
    <property type="entry name" value="Cutinase 1"/>
    <property type="match status" value="1"/>
</dbReference>
<dbReference type="Gene3D" id="3.40.50.1820">
    <property type="entry name" value="alpha/beta hydrolase"/>
    <property type="match status" value="1"/>
</dbReference>
<dbReference type="InterPro" id="IPR029058">
    <property type="entry name" value="AB_hydrolase_fold"/>
</dbReference>
<dbReference type="InterPro" id="IPR000675">
    <property type="entry name" value="Cutinase/axe"/>
</dbReference>
<dbReference type="InterPro" id="IPR043580">
    <property type="entry name" value="CUTINASE_1"/>
</dbReference>
<dbReference type="InterPro" id="IPR011150">
    <property type="entry name" value="Cutinase_monf"/>
</dbReference>
<dbReference type="PANTHER" id="PTHR48250:SF3">
    <property type="entry name" value="CUTINASE 1-RELATED"/>
    <property type="match status" value="1"/>
</dbReference>
<dbReference type="PANTHER" id="PTHR48250">
    <property type="entry name" value="CUTINASE 2-RELATED"/>
    <property type="match status" value="1"/>
</dbReference>
<dbReference type="Pfam" id="PF01083">
    <property type="entry name" value="Cutinase"/>
    <property type="match status" value="1"/>
</dbReference>
<dbReference type="PRINTS" id="PR00129">
    <property type="entry name" value="CUTINASE"/>
</dbReference>
<dbReference type="SMART" id="SM01110">
    <property type="entry name" value="Cutinase"/>
    <property type="match status" value="1"/>
</dbReference>
<dbReference type="SUPFAM" id="SSF53474">
    <property type="entry name" value="alpha/beta-Hydrolases"/>
    <property type="match status" value="1"/>
</dbReference>
<dbReference type="PROSITE" id="PS00155">
    <property type="entry name" value="CUTINASE_1"/>
    <property type="match status" value="1"/>
</dbReference>
<evidence type="ECO:0000250" key="1">
    <source>
        <dbReference type="UniProtKB" id="P00590"/>
    </source>
</evidence>
<evidence type="ECO:0000250" key="2">
    <source>
        <dbReference type="UniProtKB" id="P11373"/>
    </source>
</evidence>
<evidence type="ECO:0000250" key="3">
    <source>
        <dbReference type="UniProtKB" id="P52956"/>
    </source>
</evidence>
<evidence type="ECO:0000255" key="4"/>
<evidence type="ECO:0000255" key="5">
    <source>
        <dbReference type="PROSITE-ProRule" id="PRU10108"/>
    </source>
</evidence>
<evidence type="ECO:0000305" key="6"/>
<name>CUTI3_ASPFU</name>
<keyword id="KW-1015">Disulfide bond</keyword>
<keyword id="KW-0378">Hydrolase</keyword>
<keyword id="KW-1185">Reference proteome</keyword>
<keyword id="KW-0964">Secreted</keyword>
<keyword id="KW-0719">Serine esterase</keyword>
<keyword id="KW-0732">Signal</keyword>
<accession>Q4W9Z4</accession>
<reference key="1">
    <citation type="journal article" date="2005" name="Nature">
        <title>Genomic sequence of the pathogenic and allergenic filamentous fungus Aspergillus fumigatus.</title>
        <authorList>
            <person name="Nierman W.C."/>
            <person name="Pain A."/>
            <person name="Anderson M.J."/>
            <person name="Wortman J.R."/>
            <person name="Kim H.S."/>
            <person name="Arroyo J."/>
            <person name="Berriman M."/>
            <person name="Abe K."/>
            <person name="Archer D.B."/>
            <person name="Bermejo C."/>
            <person name="Bennett J.W."/>
            <person name="Bowyer P."/>
            <person name="Chen D."/>
            <person name="Collins M."/>
            <person name="Coulsen R."/>
            <person name="Davies R."/>
            <person name="Dyer P.S."/>
            <person name="Farman M.L."/>
            <person name="Fedorova N."/>
            <person name="Fedorova N.D."/>
            <person name="Feldblyum T.V."/>
            <person name="Fischer R."/>
            <person name="Fosker N."/>
            <person name="Fraser A."/>
            <person name="Garcia J.L."/>
            <person name="Garcia M.J."/>
            <person name="Goble A."/>
            <person name="Goldman G.H."/>
            <person name="Gomi K."/>
            <person name="Griffith-Jones S."/>
            <person name="Gwilliam R."/>
            <person name="Haas B.J."/>
            <person name="Haas H."/>
            <person name="Harris D.E."/>
            <person name="Horiuchi H."/>
            <person name="Huang J."/>
            <person name="Humphray S."/>
            <person name="Jimenez J."/>
            <person name="Keller N."/>
            <person name="Khouri H."/>
            <person name="Kitamoto K."/>
            <person name="Kobayashi T."/>
            <person name="Konzack S."/>
            <person name="Kulkarni R."/>
            <person name="Kumagai T."/>
            <person name="Lafton A."/>
            <person name="Latge J.-P."/>
            <person name="Li W."/>
            <person name="Lord A."/>
            <person name="Lu C."/>
            <person name="Majoros W.H."/>
            <person name="May G.S."/>
            <person name="Miller B.L."/>
            <person name="Mohamoud Y."/>
            <person name="Molina M."/>
            <person name="Monod M."/>
            <person name="Mouyna I."/>
            <person name="Mulligan S."/>
            <person name="Murphy L.D."/>
            <person name="O'Neil S."/>
            <person name="Paulsen I."/>
            <person name="Penalva M.A."/>
            <person name="Pertea M."/>
            <person name="Price C."/>
            <person name="Pritchard B.L."/>
            <person name="Quail M.A."/>
            <person name="Rabbinowitsch E."/>
            <person name="Rawlins N."/>
            <person name="Rajandream M.A."/>
            <person name="Reichard U."/>
            <person name="Renauld H."/>
            <person name="Robson G.D."/>
            <person name="Rodriguez de Cordoba S."/>
            <person name="Rodriguez-Pena J.M."/>
            <person name="Ronning C.M."/>
            <person name="Rutter S."/>
            <person name="Salzberg S.L."/>
            <person name="Sanchez M."/>
            <person name="Sanchez-Ferrero J.C."/>
            <person name="Saunders D."/>
            <person name="Seeger K."/>
            <person name="Squares R."/>
            <person name="Squares S."/>
            <person name="Takeuchi M."/>
            <person name="Tekaia F."/>
            <person name="Turner G."/>
            <person name="Vazquez de Aldana C.R."/>
            <person name="Weidman J."/>
            <person name="White O."/>
            <person name="Woodward J.R."/>
            <person name="Yu J.-H."/>
            <person name="Fraser C.M."/>
            <person name="Galagan J.E."/>
            <person name="Asai K."/>
            <person name="Machida M."/>
            <person name="Hall N."/>
            <person name="Barrell B.G."/>
            <person name="Denning D.W."/>
        </authorList>
    </citation>
    <scope>NUCLEOTIDE SEQUENCE [LARGE SCALE GENOMIC DNA]</scope>
    <source>
        <strain>ATCC MYA-4609 / CBS 101355 / FGSC A1100 / Af293</strain>
    </source>
</reference>
<protein>
    <recommendedName>
        <fullName>Probable cutinase 3</fullName>
        <ecNumber evidence="5">3.1.1.74</ecNumber>
    </recommendedName>
    <alternativeName>
        <fullName>Cutin hydrolase 3</fullName>
    </alternativeName>
</protein>
<comment type="function">
    <text evidence="1">Catalyzes the hydrolysis of complex carboxylic polyesters found in the cell wall of plants (By similarity). Degrades cutin, a macromolecule that forms the structure of the plant cuticle (By similarity).</text>
</comment>
<comment type="catalytic activity">
    <reaction evidence="5">
        <text>cutin + H2O = cutin monomers.</text>
        <dbReference type="EC" id="3.1.1.74"/>
    </reaction>
</comment>
<comment type="subcellular location">
    <subcellularLocation>
        <location evidence="2">Secreted</location>
    </subcellularLocation>
</comment>
<comment type="similarity">
    <text evidence="6">Belongs to the cutinase family.</text>
</comment>
<proteinExistence type="inferred from homology"/>